<evidence type="ECO:0000269" key="1">
    <source>
    </source>
</evidence>
<evidence type="ECO:0000305" key="2"/>
<dbReference type="EC" id="3.5.1.49"/>
<dbReference type="EMBL" id="X99632">
    <property type="protein sequence ID" value="CAA67953.1"/>
    <property type="molecule type" value="Genomic_DNA"/>
</dbReference>
<dbReference type="PIR" id="S74213">
    <property type="entry name" value="S74213"/>
</dbReference>
<dbReference type="SMR" id="Q50228"/>
<dbReference type="STRING" id="1122236.GCA_000378225_00963"/>
<dbReference type="GO" id="GO:0004328">
    <property type="term" value="F:formamidase activity"/>
    <property type="evidence" value="ECO:0007669"/>
    <property type="project" value="UniProtKB-EC"/>
</dbReference>
<dbReference type="Gene3D" id="2.60.120.580">
    <property type="entry name" value="Acetamidase/Formamidase-like domains"/>
    <property type="match status" value="1"/>
</dbReference>
<dbReference type="InterPro" id="IPR004304">
    <property type="entry name" value="FmdA_AmdA"/>
</dbReference>
<dbReference type="InterPro" id="IPR054833">
    <property type="entry name" value="FormamaseFmdA"/>
</dbReference>
<dbReference type="NCBIfam" id="NF045496">
    <property type="entry name" value="FormamaseFmdA"/>
    <property type="match status" value="1"/>
</dbReference>
<dbReference type="PANTHER" id="PTHR31891">
    <property type="entry name" value="FORMAMIDASE C869.04-RELATED"/>
    <property type="match status" value="1"/>
</dbReference>
<dbReference type="PANTHER" id="PTHR31891:SF1">
    <property type="entry name" value="FORMAMIDASE C869.04-RELATED"/>
    <property type="match status" value="1"/>
</dbReference>
<dbReference type="Pfam" id="PF03069">
    <property type="entry name" value="FmdA_AmdA"/>
    <property type="match status" value="1"/>
</dbReference>
<dbReference type="SUPFAM" id="SSF141130">
    <property type="entry name" value="Acetamidase/Formamidase-like"/>
    <property type="match status" value="1"/>
</dbReference>
<keyword id="KW-0903">Direct protein sequencing</keyword>
<keyword id="KW-0378">Hydrolase</keyword>
<organism>
    <name type="scientific">Methylophilus methylotrophus</name>
    <name type="common">Bacterium W3A1</name>
    <dbReference type="NCBI Taxonomy" id="17"/>
    <lineage>
        <taxon>Bacteria</taxon>
        <taxon>Pseudomonadati</taxon>
        <taxon>Pseudomonadota</taxon>
        <taxon>Betaproteobacteria</taxon>
        <taxon>Nitrosomonadales</taxon>
        <taxon>Methylophilaceae</taxon>
        <taxon>Methylophilus</taxon>
    </lineage>
</organism>
<feature type="chain" id="PRO_0000087312" description="Formamidase">
    <location>
        <begin position="1"/>
        <end position="407"/>
    </location>
</feature>
<sequence>MKTIVKLDLDKKPWEQDGQIHNRWHPDLPMIAMVKPGDEFRVECMDWTGGQIGNNDSANDVRDVDLTQVHYLSGPIGVEGAEPGDLMVVDILDVGTFDDSQWGFNGLFAKENGGGFLTDHFPEASKTIWDFHGVYTTSRHVPKVRYAGIMHPGLIGCLPSKELLDTWNKREGDLIATDPDRVPPLACPPTSQSAVMGRLSGDAAKKAAAEGARTVPPRDHGGNCDIKNLTKGSRVYFPVYVKDGGLSMGDLHFSQGDGEITFCGAIEMAGYLDIKVGLIKDGVKKYGIKNPVFQPSPITPTYRDYMIFEGISVDEAGKQHYLDVHIAYRQACLNAIEYLKKFGYSGEQAVSILGTAPVEGHISGIVDIPNACATLWIPTEIFEFDIRPNADGPKIMVPPGVDVSFTS</sequence>
<gene>
    <name type="primary">fmdA</name>
</gene>
<comment type="function">
    <text>Hydrolyzes formamide with the production of ammonia which can be used as a source of nitrogen for growth. Also acts, more slowly, on acetamide, propanamide and butanamide.</text>
</comment>
<comment type="catalytic activity">
    <reaction>
        <text>formamide + H2O = formate + NH4(+)</text>
        <dbReference type="Rhea" id="RHEA:21948"/>
        <dbReference type="ChEBI" id="CHEBI:15377"/>
        <dbReference type="ChEBI" id="CHEBI:15740"/>
        <dbReference type="ChEBI" id="CHEBI:16397"/>
        <dbReference type="ChEBI" id="CHEBI:28938"/>
        <dbReference type="EC" id="3.5.1.49"/>
    </reaction>
</comment>
<comment type="subunit">
    <text>Homotrimer.</text>
</comment>
<comment type="mass spectrometry"/>
<comment type="similarity">
    <text evidence="2">Belongs to the acetamidase/formamidase family.</text>
</comment>
<accession>Q50228</accession>
<reference key="1">
    <citation type="journal article" date="1996" name="Eur. J. Biochem.">
        <title>Molecular characterisation of formamidase from Methylophilus methylotrophus.</title>
        <authorList>
            <person name="Wyborn N.R."/>
            <person name="Mills J."/>
            <person name="Williams S.G."/>
            <person name="Jones C.W."/>
        </authorList>
    </citation>
    <scope>NUCLEOTIDE SEQUENCE [GENOMIC DNA]</scope>
    <scope>PARTIAL PROTEIN SEQUENCE</scope>
    <scope>MASS SPECTROMETRY</scope>
    <source>
        <strain>ATCC 53528 / DSM 5691 / CCUG 58724 / LMG 6787 / NCIMB 10515 / AS1</strain>
    </source>
</reference>
<reference key="2">
    <citation type="journal article" date="1994" name="Microbiology">
        <title>Purification, properties and heterologous expression of formamidase from Methylophilus methylotrophus.</title>
        <authorList>
            <person name="Wyborn N.R."/>
            <person name="Scherr D.J."/>
            <person name="Jones C.W."/>
        </authorList>
    </citation>
    <scope>CHARACTERIZATION</scope>
    <scope>PROTEIN SEQUENCE OF 1-5</scope>
    <source>
        <strain>ATCC 53528 / DSM 5691 / CCUG 58724 / LMG 6787 / NCIMB 10515 / AS1</strain>
    </source>
</reference>
<name>FMDA_METME</name>
<proteinExistence type="evidence at protein level"/>
<protein>
    <recommendedName>
        <fullName>Formamidase</fullName>
        <ecNumber>3.5.1.49</ecNumber>
    </recommendedName>
    <alternativeName>
        <fullName>Formamide amidohydrolase</fullName>
    </alternativeName>
</protein>